<organism evidence="7">
    <name type="scientific">Daucus carota subsp. sativus</name>
    <name type="common">Carrot</name>
    <dbReference type="NCBI Taxonomy" id="79200"/>
    <lineage>
        <taxon>Eukaryota</taxon>
        <taxon>Viridiplantae</taxon>
        <taxon>Streptophyta</taxon>
        <taxon>Embryophyta</taxon>
        <taxon>Tracheophyta</taxon>
        <taxon>Spermatophyta</taxon>
        <taxon>Magnoliopsida</taxon>
        <taxon>eudicotyledons</taxon>
        <taxon>Gunneridae</taxon>
        <taxon>Pentapetalae</taxon>
        <taxon>asterids</taxon>
        <taxon>campanulids</taxon>
        <taxon>Apiales</taxon>
        <taxon>Apiaceae</taxon>
        <taxon>Apioideae</taxon>
        <taxon>Scandiceae</taxon>
        <taxon>Daucinae</taxon>
        <taxon>Daucus</taxon>
        <taxon>Daucus sect. Daucus</taxon>
    </lineage>
</organism>
<proteinExistence type="evidence at protein level"/>
<evidence type="ECO:0000255" key="1">
    <source>
        <dbReference type="RuleBase" id="RU000409"/>
    </source>
</evidence>
<evidence type="ECO:0000269" key="2">
    <source>
    </source>
</evidence>
<evidence type="ECO:0000269" key="3">
    <source>
    </source>
</evidence>
<evidence type="ECO:0000303" key="4">
    <source>
    </source>
</evidence>
<evidence type="ECO:0000303" key="5">
    <source>
    </source>
</evidence>
<evidence type="ECO:0000305" key="6"/>
<evidence type="ECO:0000312" key="7">
    <source>
        <dbReference type="EMBL" id="KZM86183.1"/>
    </source>
</evidence>
<dbReference type="EMBL" id="LNRQ01000007">
    <property type="protein sequence ID" value="KZM86183.1"/>
    <property type="molecule type" value="Genomic_DNA"/>
</dbReference>
<dbReference type="SMR" id="A0A161X1M2"/>
<dbReference type="STRING" id="79200.A0A161X1M2"/>
<dbReference type="EnsemblPlants" id="KZM86183">
    <property type="protein sequence ID" value="KZM86183"/>
    <property type="gene ID" value="DCAR_023317"/>
</dbReference>
<dbReference type="Gramene" id="KZM86183">
    <property type="protein sequence ID" value="KZM86183"/>
    <property type="gene ID" value="DCAR_023317"/>
</dbReference>
<dbReference type="KEGG" id="dcr:108193625"/>
<dbReference type="OMA" id="FTYAKHR"/>
<dbReference type="OrthoDB" id="1858506at2759"/>
<dbReference type="GO" id="GO:0005737">
    <property type="term" value="C:cytoplasm"/>
    <property type="evidence" value="ECO:0007669"/>
    <property type="project" value="TreeGrafter"/>
</dbReference>
<dbReference type="GO" id="GO:0005634">
    <property type="term" value="C:nucleus"/>
    <property type="evidence" value="ECO:0007669"/>
    <property type="project" value="TreeGrafter"/>
</dbReference>
<dbReference type="GO" id="GO:0010427">
    <property type="term" value="F:abscisic acid binding"/>
    <property type="evidence" value="ECO:0007669"/>
    <property type="project" value="InterPro"/>
</dbReference>
<dbReference type="GO" id="GO:0004864">
    <property type="term" value="F:protein phosphatase inhibitor activity"/>
    <property type="evidence" value="ECO:0007669"/>
    <property type="project" value="InterPro"/>
</dbReference>
<dbReference type="GO" id="GO:0038023">
    <property type="term" value="F:signaling receptor activity"/>
    <property type="evidence" value="ECO:0007669"/>
    <property type="project" value="InterPro"/>
</dbReference>
<dbReference type="GO" id="GO:0009738">
    <property type="term" value="P:abscisic acid-activated signaling pathway"/>
    <property type="evidence" value="ECO:0007669"/>
    <property type="project" value="InterPro"/>
</dbReference>
<dbReference type="GO" id="GO:0006952">
    <property type="term" value="P:defense response"/>
    <property type="evidence" value="ECO:0007669"/>
    <property type="project" value="UniProtKB-KW"/>
</dbReference>
<dbReference type="CDD" id="cd07816">
    <property type="entry name" value="Bet_v1-like"/>
    <property type="match status" value="1"/>
</dbReference>
<dbReference type="FunFam" id="3.30.530.20:FF:000007">
    <property type="entry name" value="Major pollen allergen Bet v 1-A"/>
    <property type="match status" value="1"/>
</dbReference>
<dbReference type="Gene3D" id="3.30.530.20">
    <property type="match status" value="1"/>
</dbReference>
<dbReference type="InterPro" id="IPR000916">
    <property type="entry name" value="Bet_v_I/MLP"/>
</dbReference>
<dbReference type="InterPro" id="IPR024949">
    <property type="entry name" value="Bet_v_I_allergen"/>
</dbReference>
<dbReference type="InterPro" id="IPR050279">
    <property type="entry name" value="Plant_def-hormone_signal"/>
</dbReference>
<dbReference type="InterPro" id="IPR023393">
    <property type="entry name" value="START-like_dom_sf"/>
</dbReference>
<dbReference type="PANTHER" id="PTHR31213">
    <property type="entry name" value="OS08G0374000 PROTEIN-RELATED"/>
    <property type="match status" value="1"/>
</dbReference>
<dbReference type="PANTHER" id="PTHR31213:SF55">
    <property type="entry name" value="STRESS-INDUCED PROTEIN SAM22"/>
    <property type="match status" value="1"/>
</dbReference>
<dbReference type="Pfam" id="PF00407">
    <property type="entry name" value="Bet_v_1"/>
    <property type="match status" value="1"/>
</dbReference>
<dbReference type="PRINTS" id="PR00634">
    <property type="entry name" value="BETALLERGEN"/>
</dbReference>
<dbReference type="SMART" id="SM01037">
    <property type="entry name" value="Bet_v_1"/>
    <property type="match status" value="1"/>
</dbReference>
<dbReference type="SUPFAM" id="SSF55961">
    <property type="entry name" value="Bet v1-like"/>
    <property type="match status" value="1"/>
</dbReference>
<dbReference type="PROSITE" id="PS00451">
    <property type="entry name" value="PATHOGENESIS_BETVI"/>
    <property type="match status" value="1"/>
</dbReference>
<feature type="chain" id="PRO_0000458164" description="Dau c 1 isoallergen Dau c 1.0401">
    <location>
        <begin position="1"/>
        <end position="155"/>
    </location>
</feature>
<name>DC104_DAUCS</name>
<keyword id="KW-0020">Allergen</keyword>
<keyword id="KW-0903">Direct protein sequencing</keyword>
<keyword id="KW-0568">Pathogenesis-related protein</keyword>
<keyword id="KW-0611">Plant defense</keyword>
<protein>
    <recommendedName>
        <fullName evidence="5">Dau c 1 isoallergen Dau c 1.0401</fullName>
    </recommendedName>
    <alternativeName>
        <fullName evidence="4 5">Pathogenesis-related class 10 protein</fullName>
        <shortName evidence="4 5">PR-10 protein</shortName>
    </alternativeName>
    <allergenName evidence="5">Dau c 1.0401</allergenName>
</protein>
<reference key="1">
    <citation type="journal article" date="2021" name="Mol. Nutr. Food Res.">
        <title>A Novel Isoallergen Dau c 1.0401 in Carrot: Stability, Allergenicity, and Comparison with Other Isoallergens.</title>
        <authorList>
            <person name="Jacob T."/>
            <person name="Wangorsch A."/>
            <person name="Vogel L."/>
            <person name="Reuter A."/>
            <person name="Mahler V."/>
            <person name="Woehrl B.M."/>
        </authorList>
    </citation>
    <scope>NUCLEOTIDE SEQUENCE [MRNA]</scope>
    <scope>BIOPHYSICOCHEMICAL PROPERTIES</scope>
    <scope>SUBUNIT</scope>
    <scope>TISSUE SPECIFICITY</scope>
    <scope>IDENTIFICATION BY MASS SPECTROMETRY</scope>
    <scope>ALLERGEN</scope>
    <scope>3D-STRUCTURE MODELING</scope>
    <scope>CIRCULAR DICHROISM ANALYSIS</scope>
    <source>
        <tissue evidence="5">Root</tissue>
    </source>
</reference>
<reference evidence="7" key="2">
    <citation type="journal article" date="2016" name="Nat. Genet.">
        <title>A high-quality carrot genome assembly provides new insights into carotenoid accumulation and asterid genome evolution.</title>
        <authorList>
            <person name="Iorizzo M."/>
            <person name="Ellison S."/>
            <person name="Senalik D."/>
            <person name="Zeng P."/>
            <person name="Satapoomin P."/>
            <person name="Huang J."/>
            <person name="Bowman M."/>
            <person name="Iovene M."/>
            <person name="Sanseverino W."/>
            <person name="Cavagnaro P."/>
            <person name="Yildiz M."/>
            <person name="Macko-Podgorni A."/>
            <person name="Moranska E."/>
            <person name="Grzebelus E."/>
            <person name="Grzebelus D."/>
            <person name="Ashrafi H."/>
            <person name="Zheng Z."/>
            <person name="Cheng S."/>
            <person name="Spooner D."/>
            <person name="Van Deynze A."/>
            <person name="Simon P."/>
        </authorList>
    </citation>
    <scope>NUCLEOTIDE SEQUENCE [LARGE SCALE GENOMIC DNA]</scope>
    <source>
        <strain>cv. DH1</strain>
        <tissue evidence="7">Leaf</tissue>
    </source>
</reference>
<reference key="3">
    <citation type="journal article" date="2020" name="Mol. Nutr. Food Res.">
        <title>Food Processing Does Not Abolish the Allergenicity of the Carrot Allergen Dau c 1: Influence of pH, Temperature, and the Food Matrix.</title>
        <authorList>
            <person name="Jacob T."/>
            <person name="Vogel L."/>
            <person name="Reuter A."/>
            <person name="Wangorsch A."/>
            <person name="Kring C."/>
            <person name="Mahler V."/>
            <person name="Woehrl B.M."/>
        </authorList>
    </citation>
    <scope>PROTEIN SEQUENCE OF 6-18; 22-40; 41-55; 56-66; 72-116; 78-116; 117-124; 117-135; 125-135 AND 143-155</scope>
    <scope>IDENTIFICATION BY MASS SPECTROMETRY</scope>
    <source>
        <tissue evidence="2">Root</tissue>
    </source>
</reference>
<gene>
    <name evidence="7" type="ORF">DCAR_023317</name>
</gene>
<sequence length="155" mass="16620">MGVQKTEAEVTSSVSAEKLFKALCLDIDTLLPQVLPGAIKSSETLEGDGGVGTVKLVHLGDASPFKTMKQKVDAIDKESFTYAYSIIDGDILLGFIESINNHFAYVPNADGGCTVKSTITFNTKGDAVVPEENIKFANDQNRAIFQAVEAYLIAN</sequence>
<comment type="biophysicochemical properties">
    <temperatureDependence>
        <text evidence="3">Melting temperature is 65.3 degrees Celsius. Unfolds at 95 degrees Celsius. Partial refolding after cooling back to 25 degrees Celsius.</text>
    </temperatureDependence>
</comment>
<comment type="subunit">
    <text evidence="3">Monomer.</text>
</comment>
<comment type="tissue specificity">
    <text evidence="2 3">Expressed in roots (at protein level) (PubMed:32710524, PubMed:33547733). Expressed in roots (PubMed:33547733).</text>
</comment>
<comment type="allergen">
    <text evidence="3">Causes an allergic reaction in human. Impaired binding to IgE in immobilized assays such as immunoblots, indicating that its epitopes are modified, denatured or not accessible when it is bound to solid membranes. Soluble protein binds to IgE in inhibition assays. Induces beta-hexosaminidase release from humanized rat basophilic leukemia cells in 35% of the 17 carrot-allergic patients sera tested.</text>
</comment>
<comment type="similarity">
    <text evidence="1 6">Belongs to the BetVI family.</text>
</comment>
<accession>A0A161X1M2</accession>